<sequence>MDHKSPLVSWNVFGFDIVFNLASVLMVVITAILVFILAIVCTRNLKKRPTGKQNFIEWVFDFVRGIIESNMAWKKGGNFHFLAVTLILFIFVANMLGLPFAIVTHDHTLWWKSPTADATVTLTLSTTMILLTHYYGIKMRGTKAYAAGYFKPFWPLAIINVFEEFTSTLTLGLRLYGNIFAGELLLGLLASLFFEQPAWGWIISIPGLIVWQAFSIFVGTIQAYIFVMLSMVYMSHKVADGH</sequence>
<protein>
    <recommendedName>
        <fullName evidence="1">ATP synthase subunit a</fullName>
    </recommendedName>
    <alternativeName>
        <fullName evidence="1">ATP synthase F0 sector subunit a</fullName>
    </alternativeName>
    <alternativeName>
        <fullName evidence="1">F-ATPase subunit 6</fullName>
    </alternativeName>
</protein>
<keyword id="KW-0066">ATP synthesis</keyword>
<keyword id="KW-1003">Cell membrane</keyword>
<keyword id="KW-0138">CF(0)</keyword>
<keyword id="KW-0375">Hydrogen ion transport</keyword>
<keyword id="KW-0406">Ion transport</keyword>
<keyword id="KW-0472">Membrane</keyword>
<keyword id="KW-1185">Reference proteome</keyword>
<keyword id="KW-0812">Transmembrane</keyword>
<keyword id="KW-1133">Transmembrane helix</keyword>
<keyword id="KW-0813">Transport</keyword>
<dbReference type="EMBL" id="CP000029">
    <property type="protein sequence ID" value="AAW55108.1"/>
    <property type="molecule type" value="Genomic_DNA"/>
</dbReference>
<dbReference type="RefSeq" id="WP_001829936.1">
    <property type="nucleotide sequence ID" value="NC_002976.3"/>
</dbReference>
<dbReference type="SMR" id="Q5HMB3"/>
<dbReference type="STRING" id="176279.SERP1715"/>
<dbReference type="GeneID" id="50018193"/>
<dbReference type="KEGG" id="ser:SERP1715"/>
<dbReference type="eggNOG" id="COG0356">
    <property type="taxonomic scope" value="Bacteria"/>
</dbReference>
<dbReference type="HOGENOM" id="CLU_041018_2_3_9"/>
<dbReference type="Proteomes" id="UP000000531">
    <property type="component" value="Chromosome"/>
</dbReference>
<dbReference type="GO" id="GO:0005886">
    <property type="term" value="C:plasma membrane"/>
    <property type="evidence" value="ECO:0007669"/>
    <property type="project" value="UniProtKB-SubCell"/>
</dbReference>
<dbReference type="GO" id="GO:0045259">
    <property type="term" value="C:proton-transporting ATP synthase complex"/>
    <property type="evidence" value="ECO:0007669"/>
    <property type="project" value="UniProtKB-KW"/>
</dbReference>
<dbReference type="GO" id="GO:0046933">
    <property type="term" value="F:proton-transporting ATP synthase activity, rotational mechanism"/>
    <property type="evidence" value="ECO:0007669"/>
    <property type="project" value="UniProtKB-UniRule"/>
</dbReference>
<dbReference type="GO" id="GO:0042777">
    <property type="term" value="P:proton motive force-driven plasma membrane ATP synthesis"/>
    <property type="evidence" value="ECO:0007669"/>
    <property type="project" value="TreeGrafter"/>
</dbReference>
<dbReference type="CDD" id="cd00310">
    <property type="entry name" value="ATP-synt_Fo_a_6"/>
    <property type="match status" value="1"/>
</dbReference>
<dbReference type="FunFam" id="1.20.120.220:FF:000005">
    <property type="entry name" value="ATP synthase subunit a"/>
    <property type="match status" value="1"/>
</dbReference>
<dbReference type="Gene3D" id="1.20.120.220">
    <property type="entry name" value="ATP synthase, F0 complex, subunit A"/>
    <property type="match status" value="1"/>
</dbReference>
<dbReference type="HAMAP" id="MF_01393">
    <property type="entry name" value="ATP_synth_a_bact"/>
    <property type="match status" value="1"/>
</dbReference>
<dbReference type="InterPro" id="IPR045082">
    <property type="entry name" value="ATP_syn_F0_a_bact/chloroplast"/>
</dbReference>
<dbReference type="InterPro" id="IPR000568">
    <property type="entry name" value="ATP_synth_F0_asu"/>
</dbReference>
<dbReference type="InterPro" id="IPR023011">
    <property type="entry name" value="ATP_synth_F0_asu_AS"/>
</dbReference>
<dbReference type="InterPro" id="IPR035908">
    <property type="entry name" value="F0_ATP_A_sf"/>
</dbReference>
<dbReference type="NCBIfam" id="TIGR01131">
    <property type="entry name" value="ATP_synt_6_or_A"/>
    <property type="match status" value="1"/>
</dbReference>
<dbReference type="NCBIfam" id="NF004479">
    <property type="entry name" value="PRK05815.1-4"/>
    <property type="match status" value="1"/>
</dbReference>
<dbReference type="PANTHER" id="PTHR42823">
    <property type="entry name" value="ATP SYNTHASE SUBUNIT A, CHLOROPLASTIC"/>
    <property type="match status" value="1"/>
</dbReference>
<dbReference type="PANTHER" id="PTHR42823:SF3">
    <property type="entry name" value="ATP SYNTHASE SUBUNIT A, CHLOROPLASTIC"/>
    <property type="match status" value="1"/>
</dbReference>
<dbReference type="Pfam" id="PF00119">
    <property type="entry name" value="ATP-synt_A"/>
    <property type="match status" value="1"/>
</dbReference>
<dbReference type="PRINTS" id="PR00123">
    <property type="entry name" value="ATPASEA"/>
</dbReference>
<dbReference type="SUPFAM" id="SSF81336">
    <property type="entry name" value="F1F0 ATP synthase subunit A"/>
    <property type="match status" value="1"/>
</dbReference>
<dbReference type="PROSITE" id="PS00449">
    <property type="entry name" value="ATPASE_A"/>
    <property type="match status" value="1"/>
</dbReference>
<accession>Q5HMB3</accession>
<gene>
    <name evidence="1" type="primary">atpB</name>
    <name type="ordered locus">SERP1715</name>
</gene>
<evidence type="ECO:0000255" key="1">
    <source>
        <dbReference type="HAMAP-Rule" id="MF_01393"/>
    </source>
</evidence>
<proteinExistence type="inferred from homology"/>
<organism>
    <name type="scientific">Staphylococcus epidermidis (strain ATCC 35984 / DSM 28319 / BCRC 17069 / CCUG 31568 / BM 3577 / RP62A)</name>
    <dbReference type="NCBI Taxonomy" id="176279"/>
    <lineage>
        <taxon>Bacteria</taxon>
        <taxon>Bacillati</taxon>
        <taxon>Bacillota</taxon>
        <taxon>Bacilli</taxon>
        <taxon>Bacillales</taxon>
        <taxon>Staphylococcaceae</taxon>
        <taxon>Staphylococcus</taxon>
    </lineage>
</organism>
<comment type="function">
    <text evidence="1">Key component of the proton channel; it plays a direct role in the translocation of protons across the membrane.</text>
</comment>
<comment type="subunit">
    <text evidence="1">F-type ATPases have 2 components, CF(1) - the catalytic core - and CF(0) - the membrane proton channel. CF(1) has five subunits: alpha(3), beta(3), gamma(1), delta(1), epsilon(1). CF(0) has three main subunits: a(1), b(2) and c(9-12). The alpha and beta chains form an alternating ring which encloses part of the gamma chain. CF(1) is attached to CF(0) by a central stalk formed by the gamma and epsilon chains, while a peripheral stalk is formed by the delta and b chains.</text>
</comment>
<comment type="subcellular location">
    <subcellularLocation>
        <location evidence="1">Cell membrane</location>
        <topology evidence="1">Multi-pass membrane protein</topology>
    </subcellularLocation>
</comment>
<comment type="similarity">
    <text evidence="1">Belongs to the ATPase A chain family.</text>
</comment>
<feature type="chain" id="PRO_1000145318" description="ATP synthase subunit a">
    <location>
        <begin position="1"/>
        <end position="242"/>
    </location>
</feature>
<feature type="transmembrane region" description="Helical" evidence="1">
    <location>
        <begin position="21"/>
        <end position="41"/>
    </location>
</feature>
<feature type="transmembrane region" description="Helical" evidence="1">
    <location>
        <begin position="83"/>
        <end position="103"/>
    </location>
</feature>
<feature type="transmembrane region" description="Helical" evidence="1">
    <location>
        <begin position="118"/>
        <end position="137"/>
    </location>
</feature>
<feature type="transmembrane region" description="Helical" evidence="1">
    <location>
        <begin position="175"/>
        <end position="195"/>
    </location>
</feature>
<feature type="transmembrane region" description="Helical" evidence="1">
    <location>
        <begin position="198"/>
        <end position="218"/>
    </location>
</feature>
<name>ATP6_STAEQ</name>
<reference key="1">
    <citation type="journal article" date="2005" name="J. Bacteriol.">
        <title>Insights on evolution of virulence and resistance from the complete genome analysis of an early methicillin-resistant Staphylococcus aureus strain and a biofilm-producing methicillin-resistant Staphylococcus epidermidis strain.</title>
        <authorList>
            <person name="Gill S.R."/>
            <person name="Fouts D.E."/>
            <person name="Archer G.L."/>
            <person name="Mongodin E.F."/>
            <person name="DeBoy R.T."/>
            <person name="Ravel J."/>
            <person name="Paulsen I.T."/>
            <person name="Kolonay J.F."/>
            <person name="Brinkac L.M."/>
            <person name="Beanan M.J."/>
            <person name="Dodson R.J."/>
            <person name="Daugherty S.C."/>
            <person name="Madupu R."/>
            <person name="Angiuoli S.V."/>
            <person name="Durkin A.S."/>
            <person name="Haft D.H."/>
            <person name="Vamathevan J.J."/>
            <person name="Khouri H."/>
            <person name="Utterback T.R."/>
            <person name="Lee C."/>
            <person name="Dimitrov G."/>
            <person name="Jiang L."/>
            <person name="Qin H."/>
            <person name="Weidman J."/>
            <person name="Tran K."/>
            <person name="Kang K.H."/>
            <person name="Hance I.R."/>
            <person name="Nelson K.E."/>
            <person name="Fraser C.M."/>
        </authorList>
    </citation>
    <scope>NUCLEOTIDE SEQUENCE [LARGE SCALE GENOMIC DNA]</scope>
    <source>
        <strain>ATCC 35984 / DSM 28319 / BCRC 17069 / CCUG 31568 / BM 3577 / RP62A</strain>
    </source>
</reference>